<proteinExistence type="evidence at protein level"/>
<organism>
    <name type="scientific">Ovis aries</name>
    <name type="common">Sheep</name>
    <dbReference type="NCBI Taxonomy" id="9940"/>
    <lineage>
        <taxon>Eukaryota</taxon>
        <taxon>Metazoa</taxon>
        <taxon>Chordata</taxon>
        <taxon>Craniata</taxon>
        <taxon>Vertebrata</taxon>
        <taxon>Euteleostomi</taxon>
        <taxon>Mammalia</taxon>
        <taxon>Eutheria</taxon>
        <taxon>Laurasiatheria</taxon>
        <taxon>Artiodactyla</taxon>
        <taxon>Ruminantia</taxon>
        <taxon>Pecora</taxon>
        <taxon>Bovidae</taxon>
        <taxon>Caprinae</taxon>
        <taxon>Ovis</taxon>
    </lineage>
</organism>
<feature type="signal peptide" evidence="4">
    <location>
        <begin position="1"/>
        <end position="19"/>
    </location>
</feature>
<feature type="propeptide" id="PRO_0000455295" description="XBetaGly" evidence="2">
    <location>
        <begin position="20"/>
        <end position="871"/>
    </location>
</feature>
<feature type="chain" id="PRO_0000455296" description="Lactase/phlorizin hydrolase" evidence="2">
    <location>
        <begin position="872"/>
        <end position="1931"/>
    </location>
</feature>
<feature type="topological domain" description="Extracellular" evidence="4">
    <location>
        <begin position="20"/>
        <end position="1886"/>
    </location>
</feature>
<feature type="transmembrane region" description="Helical" evidence="4">
    <location>
        <begin position="1887"/>
        <end position="1907"/>
    </location>
</feature>
<feature type="topological domain" description="Cytoplasmic" evidence="4">
    <location>
        <begin position="1908"/>
        <end position="1931"/>
    </location>
</feature>
<feature type="region of interest" description="Glycosyl hydrolase-1 1; Region I" evidence="2 4">
    <location>
        <begin position="44"/>
        <end position="286"/>
    </location>
</feature>
<feature type="region of interest" description="Glycosyl hydrolase-1 2; Region II" evidence="2 4">
    <location>
        <begin position="364"/>
        <end position="858"/>
    </location>
</feature>
<feature type="region of interest" description="Glycosyl hydrolase-1 3; Region III. Phlorizin hydrolase/glycosylceramidase activity" evidence="2 4">
    <location>
        <begin position="905"/>
        <end position="1368"/>
    </location>
</feature>
<feature type="region of interest" description="Glycosyl hydrolase-1 4; Region IV. Lactase activity" evidence="2 4">
    <location>
        <begin position="1375"/>
        <end position="1848"/>
    </location>
</feature>
<feature type="region of interest" description="Required for homodimerization and transport to the plasma membrane" evidence="1">
    <location>
        <begin position="1649"/>
        <end position="1931"/>
    </location>
</feature>
<feature type="active site" description="Proton donor; for phlorizin hydrolase/Glycosylceramidase activity" evidence="1">
    <location>
        <position position="1068"/>
    </location>
</feature>
<feature type="active site" description="Nucleophile; for phlorizin hydrolase/Glycosylceramidase activity" evidence="1 5">
    <location>
        <position position="1275"/>
    </location>
</feature>
<feature type="active site" description="Proton donor; for lactase activity" evidence="1">
    <location>
        <position position="1540"/>
    </location>
</feature>
<feature type="active site" description="Nucleophile; for lactase activity" evidence="1 5">
    <location>
        <position position="1751"/>
    </location>
</feature>
<feature type="glycosylation site" description="N-linked (GlcNAc...) asparagine" evidence="4">
    <location>
        <position position="370"/>
    </location>
</feature>
<feature type="glycosylation site" description="N-linked (GlcNAc...) asparagine" evidence="4">
    <location>
        <position position="826"/>
    </location>
</feature>
<feature type="glycosylation site" description="N-linked (GlcNAc...) asparagine" evidence="4">
    <location>
        <position position="937"/>
    </location>
</feature>
<feature type="glycosylation site" description="N-linked (GlcNAc...) asparagine" evidence="4">
    <location>
        <position position="949"/>
    </location>
</feature>
<feature type="glycosylation site" description="N-linked (GlcNAc...) asparagine" evidence="4">
    <location>
        <position position="992"/>
    </location>
</feature>
<feature type="glycosylation site" description="N-linked (GlcNAc...) asparagine" evidence="4">
    <location>
        <position position="1014"/>
    </location>
</feature>
<feature type="glycosylation site" description="N-linked (GlcNAc...) asparagine" evidence="4">
    <location>
        <position position="1038"/>
    </location>
</feature>
<feature type="glycosylation site" description="N-linked (GlcNAc...) asparagine" evidence="4">
    <location>
        <position position="1176"/>
    </location>
</feature>
<feature type="glycosylation site" description="N-linked (GlcNAc...) asparagine" evidence="4">
    <location>
        <position position="1345"/>
    </location>
</feature>
<feature type="glycosylation site" description="N-linked (GlcNAc...) asparagine" evidence="4">
    <location>
        <position position="1421"/>
    </location>
</feature>
<feature type="glycosylation site" description="N-linked (GlcNAc...) asparagine" evidence="4">
    <location>
        <position position="1510"/>
    </location>
</feature>
<feature type="glycosylation site" description="N-linked (GlcNAc...) asparagine" evidence="4">
    <location>
        <position position="1658"/>
    </location>
</feature>
<feature type="glycosylation site" description="N-linked (GlcNAc...) asparagine" evidence="4">
    <location>
        <position position="1674"/>
    </location>
</feature>
<feature type="glycosylation site" description="N-linked (GlcNAc...) asparagine" evidence="4">
    <location>
        <position position="1763"/>
    </location>
</feature>
<feature type="glycosylation site" description="N-linked (GlcNAc...) asparagine" evidence="4">
    <location>
        <position position="1816"/>
    </location>
</feature>
<reference key="1">
    <citation type="journal article" date="2010" name="Anim. Genet.">
        <title>The sheep genome reference sequence: a work in progress.</title>
        <authorList>
            <person name="Archibald A.L."/>
            <person name="Cockett N.E."/>
            <person name="Dalrymple B.P."/>
            <person name="Faraut T."/>
            <person name="Kijas J.W."/>
            <person name="Maddox J.F."/>
            <person name="McEwan J.C."/>
            <person name="Hutton Oddy V."/>
            <person name="Raadsma H.W."/>
            <person name="Wade C."/>
            <person name="Wang J."/>
            <person name="Wang W."/>
            <person name="Xun X."/>
        </authorList>
    </citation>
    <scope>NUCLEOTIDE SEQUENCE [LARGE SCALE GENOMIC DNA]</scope>
</reference>
<reference key="2">
    <citation type="journal article" date="2003" name="Eur. J. Nutr.">
        <title>Deglycosylation by small intestinal epithelial cell beta-glucosidases is a critical step in the absorption and metabolism of dietary flavonoid glycosides in humans.</title>
        <authorList>
            <person name="Nemeth K."/>
            <person name="Plumb G.W."/>
            <person name="Berrin J.-G."/>
            <person name="Juge N."/>
            <person name="Jacob R."/>
            <person name="Naim H.Y."/>
            <person name="Williamson G."/>
            <person name="Swallow D.M."/>
            <person name="Kroon P.A."/>
        </authorList>
    </citation>
    <scope>FUNCTION</scope>
    <scope>CATALYTIC ACTIVITY</scope>
</reference>
<gene>
    <name evidence="1" type="primary">LCT</name>
    <name evidence="7" type="synonym">LPH</name>
</gene>
<keyword id="KW-1003">Cell membrane</keyword>
<keyword id="KW-0325">Glycoprotein</keyword>
<keyword id="KW-0326">Glycosidase</keyword>
<keyword id="KW-0378">Hydrolase</keyword>
<keyword id="KW-0472">Membrane</keyword>
<keyword id="KW-0511">Multifunctional enzyme</keyword>
<keyword id="KW-1185">Reference proteome</keyword>
<keyword id="KW-0732">Signal</keyword>
<keyword id="KW-0812">Transmembrane</keyword>
<keyword id="KW-1133">Transmembrane helix</keyword>
<keyword id="KW-0865">Zymogen</keyword>
<name>LPH_SHEEP</name>
<evidence type="ECO:0000250" key="1">
    <source>
        <dbReference type="UniProtKB" id="P09848"/>
    </source>
</evidence>
<evidence type="ECO:0000250" key="2">
    <source>
        <dbReference type="UniProtKB" id="P09849"/>
    </source>
</evidence>
<evidence type="ECO:0000250" key="3">
    <source>
        <dbReference type="UniProtKB" id="Q02401"/>
    </source>
</evidence>
<evidence type="ECO:0000255" key="4"/>
<evidence type="ECO:0000255" key="5">
    <source>
        <dbReference type="PROSITE-ProRule" id="PRU10055"/>
    </source>
</evidence>
<evidence type="ECO:0000269" key="6">
    <source>
    </source>
</evidence>
<evidence type="ECO:0000303" key="7">
    <source>
    </source>
</evidence>
<evidence type="ECO:0000305" key="8"/>
<evidence type="ECO:0000305" key="9">
    <source>
    </source>
</evidence>
<protein>
    <recommendedName>
        <fullName evidence="7">Lactase/phlorizin hydrolase</fullName>
    </recommendedName>
    <alternativeName>
        <fullName>Lactase/glycosylceramidase</fullName>
    </alternativeName>
    <domain>
        <recommendedName>
            <fullName evidence="1">Lactase</fullName>
            <ecNumber evidence="1">3.2.1.108</ecNumber>
        </recommendedName>
    </domain>
    <domain>
        <recommendedName>
            <fullName evidence="3">Glycosylceramidase</fullName>
            <ecNumber evidence="3">3.2.1.62</ecNumber>
        </recommendedName>
        <alternativeName>
            <fullName evidence="1">Phlorizin hydrolase</fullName>
        </alternativeName>
    </domain>
</protein>
<sequence>MELAWHLVLIVLLSFSCWGLDWDSDKNFISAAGPLTNNLLHNLRDPLGNQDPPFVAEDEEIYVCRQPLPAFLPEYFRSVRASMITHYKVFLPWAQLLPEGISENPDKGTVLCYRQLLEALKTAQLQPLVVLHHQTLPASTLQRTEAFADLFAAYASFAFRSFGDLVEIWFTFSDLERVITKLPHQESRSSRLQILTDAHRKAYEIYQEKYAAQGGKLSVVLQAEMVSKLLLEPSTSVLVKDAVDFVSLDLSYECHNEADLPQKLSELQTIEPKVKVFIFSLKLQNCLSTGNDIAQLLFGLLKAINEDQVLVVGFDISTFLSCPSSSKKSWACSLSDSLTLQTALQLGPDTAAYAWPPCSAYQRVWEAFANQSKAERDAFLQDVFPEGFLWGVSTGAFNVEGGWAEDGRGPSIWDRVGHQNTIKGQATPEVASDSYHKVDTDVALLRGLQAQVYKFSISWSRIFPTGQGHNPNPRGVAYYNKLIDSLLDSHIEPMATLFHWDLPQALQDRGGWQSEDVVDAFLDYAAFCFSTFGDRVKLWVTFHEPWVMSYAGYGTGQHAPGISDPGVASFKKVAHMVLKAHAKAWHLYNSHHRPQQQGRVGIVLNSDWAEPLSPERPEDLRAAERFLHFMLGWFAHPIFVDGDYPAALRAQIQQMNKQCPSPVAQLPEFTEAEKQLLKGSADFLGLSHYTSRLVSTAQGDTCIPSYDTIGGFSQHIDPMWPQTASSWIRVVPWGIRRLLKFVSLEYTKGKVPIYLAGNGMPIGESEDLIDDSLRVDYFNQYINEVLKAIKEDSVAVQSYVARSFIDGFEGPSGYSQRFGLYHVNFNDSSRPRTARKSAYFFTSMIEKNGFLNKVVKRQSSPGIANIPRKIRAFTFPSEVPSKAKVVWEKFSNQPKFERDLFYHGTFRDDFLWGVSSSAYQIEGAWDADGKGPSIWDNFTHTPGSNVKDNATGDVACDSYNHLDADLNMLQALKVKAYRFSISWSRIFPTGRNTSVNTHGVDYYNKLINGLVENNISPMVTLFHWDLPQALQDIGGWENPSLIDLFNSYADFCFQTFGDRVKFWMTFNEPTYQAWLGYGSGEFPPNVNDPGWGPYRIGHTIIKAHARVYHTYDEKYRQEQKGVISLSLSSHWAEPQSLVPRDVEAADRMLQFSLGWFAHPIFRNGDYPDAMKWKVGNRSELQHLATSRLPSFTEEEKRYIAATADVFCLNTYSSRIVQHTTPRLNPPSYTSDQELLEWEDTSWPATAMNRAAAWGTRRLLNWIKEEYGDIPVYITENGVGLTDPELEDTDRIFYHKTYINEALKAYRLDGVNLRGYAAWSLMDNFEWLNGYTVKFGLYHVDFNDVNRSRTARASARYYTEVITNNGMPLSKEDEFLYGQFPKDFIWSAATAAYQIEGAWRADGKGLSIWDTFSHTPLKVENNDTGDVACDSYHKIAEDLVALQTLGVTHYRLSISWTRILPDGTNKYVNEAGLNYYVRLIDTLLAANIQPQVTIYHWDLPQALQDVGGWENETIVQRFKEYAEVLFQRLGDKVKFWITLNEPYVVANQGYGYGTAAPGISFRPGTAPYIVGHNLIKAHAEVWHLYNDVYRARQGGIISITISSDWAEPRDPSNQEDVEAARRYVQFMGGWFAHPIFKNGDYPEVMKTRIRDRSLAEGLNKSRLPEFTESEKRRINGTYDFFGFNHYTTVLAYNLNYASWISSFDADRGVASITDRSWPDSGSFWLKMTPFGFRRILNWLKEEYNNPPIYVTENGVSHRGEANLNDTSRIYYLRSYINEALKALQDKVDLRGYTVWTLMDNFEWATGFSDKFGLHFVNYTDPALPRIPRESAKVYASIIRCRGFPDPAAGPHACLQQEDAEPTASPASPVSQKIQFLGLRLSTTEAQTALNVLFAFMLLGVCGVAFLSYKYFKHSKQKHTQPGEHELSHRSSF</sequence>
<comment type="function">
    <text evidence="1 6">Broad specificity glycosidase of the intestinal brush border membrane that hydrolyzes lactose, the main sugar in mammalian milk, to produce D-glucose and D-galactose (By similarity). The mature protein is composed of two domains that catalyze the hydrolysis of beta-glucopyranosides and beta-galactopyranosides, with a preference for hydrophilic aglycones (in lactose and cellobiose) for one domain and hydrophobic aglycones (in phlorizin and glycosylceramides) for the other (PubMed:12594539).</text>
</comment>
<comment type="catalytic activity">
    <reaction evidence="1">
        <text>lactose + H2O = beta-D-galactose + D-glucose</text>
        <dbReference type="Rhea" id="RHEA:10076"/>
        <dbReference type="ChEBI" id="CHEBI:4167"/>
        <dbReference type="ChEBI" id="CHEBI:15377"/>
        <dbReference type="ChEBI" id="CHEBI:17716"/>
        <dbReference type="ChEBI" id="CHEBI:27667"/>
        <dbReference type="EC" id="3.2.1.108"/>
    </reaction>
    <physiologicalReaction direction="left-to-right" evidence="1">
        <dbReference type="Rhea" id="RHEA:10077"/>
    </physiologicalReaction>
</comment>
<comment type="catalytic activity">
    <reaction evidence="1">
        <text>phlorizin + H2O = phloretin + beta-D-glucose</text>
        <dbReference type="Rhea" id="RHEA:69639"/>
        <dbReference type="ChEBI" id="CHEBI:8113"/>
        <dbReference type="ChEBI" id="CHEBI:15377"/>
        <dbReference type="ChEBI" id="CHEBI:15903"/>
        <dbReference type="ChEBI" id="CHEBI:17276"/>
    </reaction>
    <physiologicalReaction direction="left-to-right" evidence="1">
        <dbReference type="Rhea" id="RHEA:69640"/>
    </physiologicalReaction>
</comment>
<comment type="catalytic activity">
    <reaction evidence="1">
        <text>D-cellobiose + H2O = beta-D-glucose + D-glucose</text>
        <dbReference type="Rhea" id="RHEA:30679"/>
        <dbReference type="ChEBI" id="CHEBI:4167"/>
        <dbReference type="ChEBI" id="CHEBI:15377"/>
        <dbReference type="ChEBI" id="CHEBI:15903"/>
        <dbReference type="ChEBI" id="CHEBI:17057"/>
    </reaction>
    <physiologicalReaction direction="left-to-right" evidence="1">
        <dbReference type="Rhea" id="RHEA:30680"/>
    </physiologicalReaction>
</comment>
<comment type="catalytic activity">
    <reaction evidence="6">
        <text>quercetin 4'-O-beta-D-glucoside + H2O = quercetin + beta-D-glucose</text>
        <dbReference type="Rhea" id="RHEA:69647"/>
        <dbReference type="ChEBI" id="CHEBI:15377"/>
        <dbReference type="ChEBI" id="CHEBI:15903"/>
        <dbReference type="ChEBI" id="CHEBI:57694"/>
        <dbReference type="ChEBI" id="CHEBI:187902"/>
    </reaction>
    <physiologicalReaction direction="left-to-right" evidence="9">
        <dbReference type="Rhea" id="RHEA:69648"/>
    </physiologicalReaction>
</comment>
<comment type="catalytic activity">
    <reaction evidence="6">
        <text>quercetin 3-O-beta-D-glucoside + H2O = quercetin + beta-D-glucose</text>
        <dbReference type="Rhea" id="RHEA:69655"/>
        <dbReference type="ChEBI" id="CHEBI:15377"/>
        <dbReference type="ChEBI" id="CHEBI:15903"/>
        <dbReference type="ChEBI" id="CHEBI:57694"/>
        <dbReference type="ChEBI" id="CHEBI:144437"/>
    </reaction>
    <physiologicalReaction direction="left-to-right" evidence="9">
        <dbReference type="Rhea" id="RHEA:69656"/>
    </physiologicalReaction>
</comment>
<comment type="catalytic activity">
    <reaction evidence="6">
        <text>kaempferol 3-O-beta-D-glucoside + H2O = kaempferol + beta-D-glucose</text>
        <dbReference type="Rhea" id="RHEA:69659"/>
        <dbReference type="ChEBI" id="CHEBI:15377"/>
        <dbReference type="ChEBI" id="CHEBI:15903"/>
        <dbReference type="ChEBI" id="CHEBI:58573"/>
        <dbReference type="ChEBI" id="CHEBI:169942"/>
    </reaction>
    <physiologicalReaction direction="left-to-right" evidence="9">
        <dbReference type="Rhea" id="RHEA:69660"/>
    </physiologicalReaction>
</comment>
<comment type="catalytic activity">
    <reaction evidence="6">
        <text>luteolin 7-O-beta-D-glucoside + H2O = luteolin + beta-D-glucose</text>
        <dbReference type="Rhea" id="RHEA:69663"/>
        <dbReference type="ChEBI" id="CHEBI:15377"/>
        <dbReference type="ChEBI" id="CHEBI:15903"/>
        <dbReference type="ChEBI" id="CHEBI:57545"/>
        <dbReference type="ChEBI" id="CHEBI:77791"/>
    </reaction>
    <physiologicalReaction direction="left-to-right" evidence="9">
        <dbReference type="Rhea" id="RHEA:69664"/>
    </physiologicalReaction>
</comment>
<comment type="catalytic activity">
    <reaction evidence="6">
        <text>luteolin 4'-O-beta-D-glucoside + H2O = luteolin + beta-D-glucose</text>
        <dbReference type="Rhea" id="RHEA:69667"/>
        <dbReference type="ChEBI" id="CHEBI:15377"/>
        <dbReference type="ChEBI" id="CHEBI:15903"/>
        <dbReference type="ChEBI" id="CHEBI:57545"/>
        <dbReference type="ChEBI" id="CHEBI:187903"/>
    </reaction>
    <physiologicalReaction direction="left-to-right" evidence="9">
        <dbReference type="Rhea" id="RHEA:69668"/>
    </physiologicalReaction>
</comment>
<comment type="catalytic activity">
    <reaction evidence="6">
        <text>(2S)-naringenin 7-O-beta-D-glucoside + H2O = (2S)-naringenin + beta-D-glucose</text>
        <dbReference type="Rhea" id="RHEA:69671"/>
        <dbReference type="ChEBI" id="CHEBI:15377"/>
        <dbReference type="ChEBI" id="CHEBI:15903"/>
        <dbReference type="ChEBI" id="CHEBI:17846"/>
        <dbReference type="ChEBI" id="CHEBI:28327"/>
    </reaction>
    <physiologicalReaction direction="left-to-right" evidence="9">
        <dbReference type="Rhea" id="RHEA:69672"/>
    </physiologicalReaction>
</comment>
<comment type="catalytic activity">
    <reaction evidence="6">
        <text>eriodictyol-7-O-beta-D-glucoside + H2O = (S)-eriodictyol + beta-D-glucose</text>
        <dbReference type="Rhea" id="RHEA:69675"/>
        <dbReference type="ChEBI" id="CHEBI:15377"/>
        <dbReference type="ChEBI" id="CHEBI:15903"/>
        <dbReference type="ChEBI" id="CHEBI:28412"/>
        <dbReference type="ChEBI" id="CHEBI:139458"/>
    </reaction>
    <physiologicalReaction direction="left-to-right" evidence="9">
        <dbReference type="Rhea" id="RHEA:69676"/>
    </physiologicalReaction>
</comment>
<comment type="catalytic activity">
    <reaction evidence="6">
        <text>apigenin 7-O-beta-D-glucoside + H2O = apigenin + beta-D-glucose</text>
        <dbReference type="Rhea" id="RHEA:69679"/>
        <dbReference type="ChEBI" id="CHEBI:15377"/>
        <dbReference type="ChEBI" id="CHEBI:15903"/>
        <dbReference type="ChEBI" id="CHEBI:58470"/>
        <dbReference type="ChEBI" id="CHEBI:77722"/>
    </reaction>
    <physiologicalReaction direction="left-to-right" evidence="9">
        <dbReference type="Rhea" id="RHEA:69680"/>
    </physiologicalReaction>
</comment>
<comment type="catalytic activity">
    <reaction evidence="6">
        <text>daidzein 7-O-beta-D-glucoside + H2O = daidzein + beta-D-glucose + H(+)</text>
        <dbReference type="Rhea" id="RHEA:69683"/>
        <dbReference type="ChEBI" id="CHEBI:15377"/>
        <dbReference type="ChEBI" id="CHEBI:15378"/>
        <dbReference type="ChEBI" id="CHEBI:15903"/>
        <dbReference type="ChEBI" id="CHEBI:42202"/>
        <dbReference type="ChEBI" id="CHEBI:77764"/>
    </reaction>
    <physiologicalReaction direction="left-to-right" evidence="9">
        <dbReference type="Rhea" id="RHEA:69684"/>
    </physiologicalReaction>
</comment>
<comment type="catalytic activity">
    <reaction evidence="6">
        <text>genistein 7-O-beta-D-glucoside + H2O = genistein + beta-D-glucose</text>
        <dbReference type="Rhea" id="RHEA:69687"/>
        <dbReference type="ChEBI" id="CHEBI:15377"/>
        <dbReference type="ChEBI" id="CHEBI:15903"/>
        <dbReference type="ChEBI" id="CHEBI:74224"/>
        <dbReference type="ChEBI" id="CHEBI:140305"/>
    </reaction>
    <physiologicalReaction direction="left-to-right" evidence="9">
        <dbReference type="Rhea" id="RHEA:69688"/>
    </physiologicalReaction>
</comment>
<comment type="catalytic activity">
    <reaction evidence="3">
        <text>a beta-D-galactosyl-N-acylsphingosine + H2O = a ceramide + beta-D-galactose.</text>
        <dbReference type="EC" id="3.2.1.62"/>
    </reaction>
</comment>
<comment type="catalytic activity">
    <reaction evidence="3">
        <text>beta-D-glucosyl-(1&lt;-&gt;1')-N-hexadecanoylsphing-4-enine + H2O = N-hexadecanoylsphing-4-enine + beta-D-glucose</text>
        <dbReference type="Rhea" id="RHEA:69699"/>
        <dbReference type="ChEBI" id="CHEBI:15377"/>
        <dbReference type="ChEBI" id="CHEBI:15903"/>
        <dbReference type="ChEBI" id="CHEBI:72959"/>
        <dbReference type="ChEBI" id="CHEBI:84716"/>
    </reaction>
    <physiologicalReaction direction="left-to-right" evidence="3">
        <dbReference type="Rhea" id="RHEA:69700"/>
    </physiologicalReaction>
</comment>
<comment type="catalytic activity">
    <reaction evidence="3">
        <text>beta-D-galactosyl-(1&lt;-&gt;1')-N-hexadecanoylsphing-4-enine + H2O = beta-D-galactose + N-hexadecanoylsphing-4-enine</text>
        <dbReference type="Rhea" id="RHEA:69703"/>
        <dbReference type="ChEBI" id="CHEBI:15377"/>
        <dbReference type="ChEBI" id="CHEBI:27667"/>
        <dbReference type="ChEBI" id="CHEBI:72959"/>
        <dbReference type="ChEBI" id="CHEBI:83259"/>
    </reaction>
    <physiologicalReaction direction="left-to-right" evidence="3">
        <dbReference type="Rhea" id="RHEA:69704"/>
    </physiologicalReaction>
</comment>
<comment type="catalytic activity">
    <reaction evidence="3">
        <text>beta-D-galactosyl-(1&lt;-&gt;1')-N-hexadecanoylsphinganine + H2O = N-hexadecanoylsphinganine + beta-D-galactose</text>
        <dbReference type="Rhea" id="RHEA:69707"/>
        <dbReference type="ChEBI" id="CHEBI:15377"/>
        <dbReference type="ChEBI" id="CHEBI:27667"/>
        <dbReference type="ChEBI" id="CHEBI:67042"/>
        <dbReference type="ChEBI" id="CHEBI:84783"/>
    </reaction>
    <physiologicalReaction direction="left-to-right" evidence="3">
        <dbReference type="Rhea" id="RHEA:69708"/>
    </physiologicalReaction>
</comment>
<comment type="catalytic activity">
    <reaction evidence="3">
        <text>beta-D-glucosyl-(1&lt;-&gt;1')-N-hexadecanoylsphinganine + H2O = N-hexadecanoylsphinganine + beta-D-glucose</text>
        <dbReference type="Rhea" id="RHEA:69711"/>
        <dbReference type="ChEBI" id="CHEBI:15377"/>
        <dbReference type="ChEBI" id="CHEBI:15903"/>
        <dbReference type="ChEBI" id="CHEBI:67042"/>
        <dbReference type="ChEBI" id="CHEBI:84782"/>
    </reaction>
    <physiologicalReaction direction="left-to-right" evidence="3">
        <dbReference type="Rhea" id="RHEA:69712"/>
    </physiologicalReaction>
</comment>
<comment type="subunit">
    <text evidence="1">Homodimer.</text>
</comment>
<comment type="subcellular location">
    <subcellularLocation>
        <location evidence="1">Apical cell membrane</location>
        <topology evidence="1">Single-pass type I membrane protein</topology>
    </subcellularLocation>
    <text evidence="2">Brush border.</text>
</comment>
<comment type="domain">
    <text evidence="1">The glycosyl hydrolase-1 3/region III carries the phlorizin hydrolase/glycosylceramidase activities.</text>
</comment>
<comment type="domain">
    <text evidence="1">The glycosyl hydrolase-1 4/region IV carries the lactase activity.</text>
</comment>
<comment type="PTM">
    <text evidence="1">N-glycosylated.</text>
</comment>
<comment type="similarity">
    <text evidence="8">Belongs to the glycosyl hydrolase 1 family.</text>
</comment>
<accession>W5PLZ6</accession>
<dbReference type="EC" id="3.2.1.108" evidence="1"/>
<dbReference type="EC" id="3.2.1.62" evidence="3"/>
<dbReference type="EMBL" id="AMGL01054137">
    <property type="status" value="NOT_ANNOTATED_CDS"/>
    <property type="molecule type" value="Genomic_DNA"/>
</dbReference>
<dbReference type="EMBL" id="AMGL01054138">
    <property type="status" value="NOT_ANNOTATED_CDS"/>
    <property type="molecule type" value="Genomic_DNA"/>
</dbReference>
<dbReference type="SMR" id="W5PLZ6"/>
<dbReference type="STRING" id="9940.ENSOARP00000011470"/>
<dbReference type="GlyCosmos" id="W5PLZ6">
    <property type="glycosylation" value="15 sites, No reported glycans"/>
</dbReference>
<dbReference type="PaxDb" id="9940-ENSOARP00000011470"/>
<dbReference type="Ensembl" id="ENSOART00225082495">
    <property type="protein sequence ID" value="ENSOARP00225042828"/>
    <property type="gene ID" value="ENSOARG00225049689"/>
</dbReference>
<dbReference type="eggNOG" id="KOG0626">
    <property type="taxonomic scope" value="Eukaryota"/>
</dbReference>
<dbReference type="HOGENOM" id="CLU_001859_5_3_1"/>
<dbReference type="OMA" id="AHWAEPK"/>
<dbReference type="Proteomes" id="UP000002356">
    <property type="component" value="Chromosome 2"/>
</dbReference>
<dbReference type="Bgee" id="ENSOARG00000010689">
    <property type="expression patterns" value="Expressed in duodenum and 6 other cell types or tissues"/>
</dbReference>
<dbReference type="GO" id="GO:0016324">
    <property type="term" value="C:apical plasma membrane"/>
    <property type="evidence" value="ECO:0007669"/>
    <property type="project" value="UniProtKB-SubCell"/>
</dbReference>
<dbReference type="GO" id="GO:0008422">
    <property type="term" value="F:beta-glucosidase activity"/>
    <property type="evidence" value="ECO:0000314"/>
    <property type="project" value="UniProtKB"/>
</dbReference>
<dbReference type="GO" id="GO:0004336">
    <property type="term" value="F:galactosylceramidase activity"/>
    <property type="evidence" value="ECO:0000250"/>
    <property type="project" value="UniProtKB"/>
</dbReference>
<dbReference type="GO" id="GO:0004348">
    <property type="term" value="F:glucosylceramidase activity"/>
    <property type="evidence" value="ECO:0000250"/>
    <property type="project" value="UniProtKB"/>
</dbReference>
<dbReference type="GO" id="GO:0000016">
    <property type="term" value="F:lactase activity"/>
    <property type="evidence" value="ECO:0000250"/>
    <property type="project" value="UniProtKB"/>
</dbReference>
<dbReference type="GO" id="GO:0140749">
    <property type="term" value="F:phlorizin hydrolase activity"/>
    <property type="evidence" value="ECO:0000250"/>
    <property type="project" value="UniProtKB"/>
</dbReference>
<dbReference type="GO" id="GO:2000892">
    <property type="term" value="P:cellobiose catabolic process"/>
    <property type="evidence" value="ECO:0000250"/>
    <property type="project" value="UniProtKB"/>
</dbReference>
<dbReference type="GO" id="GO:0046477">
    <property type="term" value="P:glycosylceramide catabolic process"/>
    <property type="evidence" value="ECO:0000250"/>
    <property type="project" value="UniProtKB"/>
</dbReference>
<dbReference type="GO" id="GO:0005990">
    <property type="term" value="P:lactose catabolic process"/>
    <property type="evidence" value="ECO:0000250"/>
    <property type="project" value="UniProtKB"/>
</dbReference>
<dbReference type="GO" id="GO:1901733">
    <property type="term" value="P:quercetin catabolic process"/>
    <property type="evidence" value="ECO:0000250"/>
    <property type="project" value="UniProtKB"/>
</dbReference>
<dbReference type="FunFam" id="3.20.20.80:FF:000117">
    <property type="entry name" value="Lactase"/>
    <property type="match status" value="1"/>
</dbReference>
<dbReference type="FunFam" id="3.20.20.80:FF:000013">
    <property type="entry name" value="lactase-phlorizin hydrolase"/>
    <property type="match status" value="3"/>
</dbReference>
<dbReference type="Gene3D" id="3.20.20.80">
    <property type="entry name" value="Glycosidases"/>
    <property type="match status" value="4"/>
</dbReference>
<dbReference type="InterPro" id="IPR001360">
    <property type="entry name" value="Glyco_hydro_1"/>
</dbReference>
<dbReference type="InterPro" id="IPR018120">
    <property type="entry name" value="Glyco_hydro_1_AS"/>
</dbReference>
<dbReference type="InterPro" id="IPR033132">
    <property type="entry name" value="Glyco_hydro_1_N_CS"/>
</dbReference>
<dbReference type="InterPro" id="IPR017853">
    <property type="entry name" value="Glycoside_hydrolase_SF"/>
</dbReference>
<dbReference type="PANTHER" id="PTHR10353">
    <property type="entry name" value="GLYCOSYL HYDROLASE"/>
    <property type="match status" value="1"/>
</dbReference>
<dbReference type="PANTHER" id="PTHR10353:SF36">
    <property type="entry name" value="LP05116P"/>
    <property type="match status" value="1"/>
</dbReference>
<dbReference type="Pfam" id="PF00232">
    <property type="entry name" value="Glyco_hydro_1"/>
    <property type="match status" value="4"/>
</dbReference>
<dbReference type="PRINTS" id="PR00131">
    <property type="entry name" value="GLHYDRLASE1"/>
</dbReference>
<dbReference type="SUPFAM" id="SSF51445">
    <property type="entry name" value="(Trans)glycosidases"/>
    <property type="match status" value="4"/>
</dbReference>
<dbReference type="PROSITE" id="PS00572">
    <property type="entry name" value="GLYCOSYL_HYDROL_F1_1"/>
    <property type="match status" value="2"/>
</dbReference>
<dbReference type="PROSITE" id="PS00653">
    <property type="entry name" value="GLYCOSYL_HYDROL_F1_2"/>
    <property type="match status" value="3"/>
</dbReference>